<reference key="1">
    <citation type="journal article" date="2009" name="Infect. Immun.">
        <title>Comparative genomics reveal extensive transposon-mediated genomic plasticity and diversity among potential effector proteins within the genus Coxiella.</title>
        <authorList>
            <person name="Beare P.A."/>
            <person name="Unsworth N."/>
            <person name="Andoh M."/>
            <person name="Voth D.E."/>
            <person name="Omsland A."/>
            <person name="Gilk S.D."/>
            <person name="Williams K.P."/>
            <person name="Sobral B.W."/>
            <person name="Kupko J.J. III"/>
            <person name="Porcella S.F."/>
            <person name="Samuel J.E."/>
            <person name="Heinzen R.A."/>
        </authorList>
    </citation>
    <scope>NUCLEOTIDE SEQUENCE [LARGE SCALE GENOMIC DNA]</scope>
    <source>
        <strain>Dugway 5J108-111</strain>
    </source>
</reference>
<keyword id="KW-0030">Aminoacyl-tRNA synthetase</keyword>
<keyword id="KW-0067">ATP-binding</keyword>
<keyword id="KW-0963">Cytoplasm</keyword>
<keyword id="KW-0436">Ligase</keyword>
<keyword id="KW-0547">Nucleotide-binding</keyword>
<keyword id="KW-0648">Protein biosynthesis</keyword>
<gene>
    <name evidence="1" type="primary">glyQ</name>
    <name type="ordered locus">CBUD_0208</name>
</gene>
<proteinExistence type="inferred from homology"/>
<feature type="chain" id="PRO_1000078524" description="Glycine--tRNA ligase alpha subunit">
    <location>
        <begin position="1"/>
        <end position="319"/>
    </location>
</feature>
<dbReference type="EC" id="6.1.1.14" evidence="1"/>
<dbReference type="EMBL" id="CP000733">
    <property type="protein sequence ID" value="ABS78360.1"/>
    <property type="molecule type" value="Genomic_DNA"/>
</dbReference>
<dbReference type="RefSeq" id="WP_005769976.1">
    <property type="nucleotide sequence ID" value="NC_009727.1"/>
</dbReference>
<dbReference type="SMR" id="A9KBT8"/>
<dbReference type="KEGG" id="cbd:CBUD_0208"/>
<dbReference type="HOGENOM" id="CLU_057066_1_0_6"/>
<dbReference type="Proteomes" id="UP000008555">
    <property type="component" value="Chromosome"/>
</dbReference>
<dbReference type="GO" id="GO:0005829">
    <property type="term" value="C:cytosol"/>
    <property type="evidence" value="ECO:0007669"/>
    <property type="project" value="TreeGrafter"/>
</dbReference>
<dbReference type="GO" id="GO:0005524">
    <property type="term" value="F:ATP binding"/>
    <property type="evidence" value="ECO:0007669"/>
    <property type="project" value="UniProtKB-UniRule"/>
</dbReference>
<dbReference type="GO" id="GO:0004820">
    <property type="term" value="F:glycine-tRNA ligase activity"/>
    <property type="evidence" value="ECO:0007669"/>
    <property type="project" value="UniProtKB-UniRule"/>
</dbReference>
<dbReference type="GO" id="GO:0006426">
    <property type="term" value="P:glycyl-tRNA aminoacylation"/>
    <property type="evidence" value="ECO:0007669"/>
    <property type="project" value="UniProtKB-UniRule"/>
</dbReference>
<dbReference type="CDD" id="cd00733">
    <property type="entry name" value="GlyRS_alpha_core"/>
    <property type="match status" value="1"/>
</dbReference>
<dbReference type="FunFam" id="3.30.930.10:FF:000006">
    <property type="entry name" value="Glycine--tRNA ligase alpha subunit"/>
    <property type="match status" value="1"/>
</dbReference>
<dbReference type="Gene3D" id="3.30.930.10">
    <property type="entry name" value="Bira Bifunctional Protein, Domain 2"/>
    <property type="match status" value="1"/>
</dbReference>
<dbReference type="Gene3D" id="1.20.58.180">
    <property type="entry name" value="Class II aaRS and biotin synthetases, domain 2"/>
    <property type="match status" value="1"/>
</dbReference>
<dbReference type="HAMAP" id="MF_00254">
    <property type="entry name" value="Gly_tRNA_synth_alpha"/>
    <property type="match status" value="1"/>
</dbReference>
<dbReference type="InterPro" id="IPR045864">
    <property type="entry name" value="aa-tRNA-synth_II/BPL/LPL"/>
</dbReference>
<dbReference type="InterPro" id="IPR006194">
    <property type="entry name" value="Gly-tRNA-synth_heterodimer"/>
</dbReference>
<dbReference type="InterPro" id="IPR002310">
    <property type="entry name" value="Gly-tRNA_ligase_asu"/>
</dbReference>
<dbReference type="NCBIfam" id="TIGR00388">
    <property type="entry name" value="glyQ"/>
    <property type="match status" value="1"/>
</dbReference>
<dbReference type="NCBIfam" id="NF006827">
    <property type="entry name" value="PRK09348.1"/>
    <property type="match status" value="1"/>
</dbReference>
<dbReference type="PANTHER" id="PTHR30075:SF2">
    <property type="entry name" value="GLYCINE--TRNA LIGASE, CHLOROPLASTIC_MITOCHONDRIAL 2"/>
    <property type="match status" value="1"/>
</dbReference>
<dbReference type="PANTHER" id="PTHR30075">
    <property type="entry name" value="GLYCYL-TRNA SYNTHETASE"/>
    <property type="match status" value="1"/>
</dbReference>
<dbReference type="Pfam" id="PF02091">
    <property type="entry name" value="tRNA-synt_2e"/>
    <property type="match status" value="1"/>
</dbReference>
<dbReference type="PRINTS" id="PR01044">
    <property type="entry name" value="TRNASYNTHGA"/>
</dbReference>
<dbReference type="SUPFAM" id="SSF55681">
    <property type="entry name" value="Class II aaRS and biotin synthetases"/>
    <property type="match status" value="1"/>
</dbReference>
<dbReference type="PROSITE" id="PS50861">
    <property type="entry name" value="AA_TRNA_LIGASE_II_GLYAB"/>
    <property type="match status" value="1"/>
</dbReference>
<organism>
    <name type="scientific">Coxiella burnetii (strain Dugway 5J108-111)</name>
    <dbReference type="NCBI Taxonomy" id="434922"/>
    <lineage>
        <taxon>Bacteria</taxon>
        <taxon>Pseudomonadati</taxon>
        <taxon>Pseudomonadota</taxon>
        <taxon>Gammaproteobacteria</taxon>
        <taxon>Legionellales</taxon>
        <taxon>Coxiellaceae</taxon>
        <taxon>Coxiella</taxon>
    </lineage>
</organism>
<comment type="catalytic activity">
    <reaction evidence="1">
        <text>tRNA(Gly) + glycine + ATP = glycyl-tRNA(Gly) + AMP + diphosphate</text>
        <dbReference type="Rhea" id="RHEA:16013"/>
        <dbReference type="Rhea" id="RHEA-COMP:9664"/>
        <dbReference type="Rhea" id="RHEA-COMP:9683"/>
        <dbReference type="ChEBI" id="CHEBI:30616"/>
        <dbReference type="ChEBI" id="CHEBI:33019"/>
        <dbReference type="ChEBI" id="CHEBI:57305"/>
        <dbReference type="ChEBI" id="CHEBI:78442"/>
        <dbReference type="ChEBI" id="CHEBI:78522"/>
        <dbReference type="ChEBI" id="CHEBI:456215"/>
        <dbReference type="EC" id="6.1.1.14"/>
    </reaction>
</comment>
<comment type="subunit">
    <text evidence="1">Tetramer of two alpha and two beta subunits.</text>
</comment>
<comment type="subcellular location">
    <subcellularLocation>
        <location evidence="1">Cytoplasm</location>
    </subcellularLocation>
</comment>
<comment type="similarity">
    <text evidence="1">Belongs to the class-II aminoacyl-tRNA synthetase family.</text>
</comment>
<protein>
    <recommendedName>
        <fullName evidence="1">Glycine--tRNA ligase alpha subunit</fullName>
        <ecNumber evidence="1">6.1.1.14</ecNumber>
    </recommendedName>
    <alternativeName>
        <fullName evidence="1">Glycyl-tRNA synthetase alpha subunit</fullName>
        <shortName evidence="1">GlyRS</shortName>
    </alternativeName>
</protein>
<evidence type="ECO:0000255" key="1">
    <source>
        <dbReference type="HAMAP-Rule" id="MF_00254"/>
    </source>
</evidence>
<accession>A9KBT8</accession>
<name>SYGA_COXBN</name>
<sequence>MKSSHPVNFQQMILALQEYWASQGCVLLQPFDMEVGAGTFHPATFLRAIGPEPWRAAYVQPSRRPTDGRYGDNPNRTQHYYQFQVVLKPSPDDIQDIYLGSLKALGIDPLTHDIRFVEDNWEAPTLGSWGVGWEVWQDGMEITQFTYFQQIGGLECKPVTGEITYGLERLAMFLQGIDNMFDLVWTEGPNGRVTYGQIFQQNEVEMSAYNFEYANVEALFNFFDFYEKEASQLIEVHLPLAAYEMVLKASHTFNLLDARQAISVTERQRFILRVRKLAQAVAEAYYSAREKLGFPMLEEISSSSSRVLPLAGNDRVKGC</sequence>